<sequence>MRVLGIETSCDETAAAVVTEGGDVLSDVVRSQVALHAPYGGVVPEVAARDHARAVVPVVREALSRAGVSAADLDGIAVTSRPGLAGALLVGLQAAKGLAWAAGKPLVGVDHLVGHLLAVFLRRGGAPLSDERERPSFPYVALLASGGHTAIYRVDGPALGAIRELGATRDDAAGEAFDKVAKLLGLGYPGGPVVDRLAAGGDAAAAADAVPALMARKESLEFSFSGIKSSVARHVAKRGRPEGQALRDLCAAFQGAVVDALVQKTVRAARAEGIGRVVLGGGVAANQGLRAKMAAACERRGLALFVPPLASCTDNGAMIAYAGALRLAAGERDTLDLAPETRTALPRVTRKGGGAR</sequence>
<evidence type="ECO:0000255" key="1">
    <source>
        <dbReference type="HAMAP-Rule" id="MF_01445"/>
    </source>
</evidence>
<protein>
    <recommendedName>
        <fullName evidence="1">tRNA N6-adenosine threonylcarbamoyltransferase</fullName>
        <ecNumber evidence="1">2.3.1.234</ecNumber>
    </recommendedName>
    <alternativeName>
        <fullName evidence="1">N6-L-threonylcarbamoyladenine synthase</fullName>
        <shortName evidence="1">t(6)A synthase</shortName>
    </alternativeName>
    <alternativeName>
        <fullName evidence="1">t(6)A37 threonylcarbamoyladenosine biosynthesis protein TsaD</fullName>
    </alternativeName>
    <alternativeName>
        <fullName evidence="1">tRNA threonylcarbamoyladenosine biosynthesis protein TsaD</fullName>
    </alternativeName>
</protein>
<keyword id="KW-0012">Acyltransferase</keyword>
<keyword id="KW-0963">Cytoplasm</keyword>
<keyword id="KW-0408">Iron</keyword>
<keyword id="KW-0479">Metal-binding</keyword>
<keyword id="KW-1185">Reference proteome</keyword>
<keyword id="KW-0808">Transferase</keyword>
<keyword id="KW-0819">tRNA processing</keyword>
<dbReference type="EC" id="2.3.1.234" evidence="1"/>
<dbReference type="EMBL" id="AM746676">
    <property type="protein sequence ID" value="CAN91772.1"/>
    <property type="molecule type" value="Genomic_DNA"/>
</dbReference>
<dbReference type="RefSeq" id="WP_012234249.1">
    <property type="nucleotide sequence ID" value="NC_010162.1"/>
</dbReference>
<dbReference type="SMR" id="A9FDL0"/>
<dbReference type="STRING" id="448385.sce1614"/>
<dbReference type="KEGG" id="scl:sce1614"/>
<dbReference type="eggNOG" id="COG0533">
    <property type="taxonomic scope" value="Bacteria"/>
</dbReference>
<dbReference type="HOGENOM" id="CLU_023208_0_2_7"/>
<dbReference type="OrthoDB" id="9806197at2"/>
<dbReference type="BioCyc" id="SCEL448385:SCE_RS08320-MONOMER"/>
<dbReference type="Proteomes" id="UP000002139">
    <property type="component" value="Chromosome"/>
</dbReference>
<dbReference type="GO" id="GO:0005737">
    <property type="term" value="C:cytoplasm"/>
    <property type="evidence" value="ECO:0007669"/>
    <property type="project" value="UniProtKB-SubCell"/>
</dbReference>
<dbReference type="GO" id="GO:0005506">
    <property type="term" value="F:iron ion binding"/>
    <property type="evidence" value="ECO:0007669"/>
    <property type="project" value="UniProtKB-UniRule"/>
</dbReference>
<dbReference type="GO" id="GO:0061711">
    <property type="term" value="F:N(6)-L-threonylcarbamoyladenine synthase activity"/>
    <property type="evidence" value="ECO:0007669"/>
    <property type="project" value="UniProtKB-EC"/>
</dbReference>
<dbReference type="GO" id="GO:0002949">
    <property type="term" value="P:tRNA threonylcarbamoyladenosine modification"/>
    <property type="evidence" value="ECO:0007669"/>
    <property type="project" value="UniProtKB-UniRule"/>
</dbReference>
<dbReference type="CDD" id="cd24133">
    <property type="entry name" value="ASKHA_NBD_TsaD_bac"/>
    <property type="match status" value="1"/>
</dbReference>
<dbReference type="FunFam" id="3.30.420.40:FF:000012">
    <property type="entry name" value="tRNA N6-adenosine threonylcarbamoyltransferase"/>
    <property type="match status" value="1"/>
</dbReference>
<dbReference type="FunFam" id="3.30.420.40:FF:000040">
    <property type="entry name" value="tRNA N6-adenosine threonylcarbamoyltransferase"/>
    <property type="match status" value="1"/>
</dbReference>
<dbReference type="Gene3D" id="3.30.420.40">
    <property type="match status" value="2"/>
</dbReference>
<dbReference type="HAMAP" id="MF_01445">
    <property type="entry name" value="TsaD"/>
    <property type="match status" value="1"/>
</dbReference>
<dbReference type="InterPro" id="IPR043129">
    <property type="entry name" value="ATPase_NBD"/>
</dbReference>
<dbReference type="InterPro" id="IPR000905">
    <property type="entry name" value="Gcp-like_dom"/>
</dbReference>
<dbReference type="InterPro" id="IPR017861">
    <property type="entry name" value="KAE1/TsaD"/>
</dbReference>
<dbReference type="InterPro" id="IPR022450">
    <property type="entry name" value="TsaD"/>
</dbReference>
<dbReference type="NCBIfam" id="TIGR00329">
    <property type="entry name" value="gcp_kae1"/>
    <property type="match status" value="1"/>
</dbReference>
<dbReference type="NCBIfam" id="TIGR03723">
    <property type="entry name" value="T6A_TsaD_YgjD"/>
    <property type="match status" value="1"/>
</dbReference>
<dbReference type="PANTHER" id="PTHR11735">
    <property type="entry name" value="TRNA N6-ADENOSINE THREONYLCARBAMOYLTRANSFERASE"/>
    <property type="match status" value="1"/>
</dbReference>
<dbReference type="PANTHER" id="PTHR11735:SF6">
    <property type="entry name" value="TRNA N6-ADENOSINE THREONYLCARBAMOYLTRANSFERASE, MITOCHONDRIAL"/>
    <property type="match status" value="1"/>
</dbReference>
<dbReference type="Pfam" id="PF00814">
    <property type="entry name" value="TsaD"/>
    <property type="match status" value="1"/>
</dbReference>
<dbReference type="PRINTS" id="PR00789">
    <property type="entry name" value="OSIALOPTASE"/>
</dbReference>
<dbReference type="SUPFAM" id="SSF53067">
    <property type="entry name" value="Actin-like ATPase domain"/>
    <property type="match status" value="1"/>
</dbReference>
<proteinExistence type="inferred from homology"/>
<accession>A9FDL0</accession>
<feature type="chain" id="PRO_1000087492" description="tRNA N6-adenosine threonylcarbamoyltransferase">
    <location>
        <begin position="1"/>
        <end position="356"/>
    </location>
</feature>
<feature type="binding site" evidence="1">
    <location>
        <position position="111"/>
    </location>
    <ligand>
        <name>Fe cation</name>
        <dbReference type="ChEBI" id="CHEBI:24875"/>
    </ligand>
</feature>
<feature type="binding site" evidence="1">
    <location>
        <position position="115"/>
    </location>
    <ligand>
        <name>Fe cation</name>
        <dbReference type="ChEBI" id="CHEBI:24875"/>
    </ligand>
</feature>
<feature type="binding site" evidence="1">
    <location>
        <begin position="143"/>
        <end position="147"/>
    </location>
    <ligand>
        <name>substrate</name>
    </ligand>
</feature>
<feature type="binding site" evidence="1">
    <location>
        <position position="178"/>
    </location>
    <ligand>
        <name>substrate</name>
    </ligand>
</feature>
<feature type="binding site" evidence="1">
    <location>
        <position position="191"/>
    </location>
    <ligand>
        <name>substrate</name>
    </ligand>
</feature>
<feature type="binding site" evidence="1">
    <location>
        <position position="195"/>
    </location>
    <ligand>
        <name>substrate</name>
    </ligand>
</feature>
<feature type="binding site" evidence="1">
    <location>
        <position position="286"/>
    </location>
    <ligand>
        <name>substrate</name>
    </ligand>
</feature>
<feature type="binding site" evidence="1">
    <location>
        <position position="314"/>
    </location>
    <ligand>
        <name>Fe cation</name>
        <dbReference type="ChEBI" id="CHEBI:24875"/>
    </ligand>
</feature>
<comment type="function">
    <text evidence="1">Required for the formation of a threonylcarbamoyl group on adenosine at position 37 (t(6)A37) in tRNAs that read codons beginning with adenine. Is involved in the transfer of the threonylcarbamoyl moiety of threonylcarbamoyl-AMP (TC-AMP) to the N6 group of A37, together with TsaE and TsaB. TsaD likely plays a direct catalytic role in this reaction.</text>
</comment>
<comment type="catalytic activity">
    <reaction evidence="1">
        <text>L-threonylcarbamoyladenylate + adenosine(37) in tRNA = N(6)-L-threonylcarbamoyladenosine(37) in tRNA + AMP + H(+)</text>
        <dbReference type="Rhea" id="RHEA:37059"/>
        <dbReference type="Rhea" id="RHEA-COMP:10162"/>
        <dbReference type="Rhea" id="RHEA-COMP:10163"/>
        <dbReference type="ChEBI" id="CHEBI:15378"/>
        <dbReference type="ChEBI" id="CHEBI:73682"/>
        <dbReference type="ChEBI" id="CHEBI:74411"/>
        <dbReference type="ChEBI" id="CHEBI:74418"/>
        <dbReference type="ChEBI" id="CHEBI:456215"/>
        <dbReference type="EC" id="2.3.1.234"/>
    </reaction>
</comment>
<comment type="cofactor">
    <cofactor evidence="1">
        <name>Fe(2+)</name>
        <dbReference type="ChEBI" id="CHEBI:29033"/>
    </cofactor>
    <text evidence="1">Binds 1 Fe(2+) ion per subunit.</text>
</comment>
<comment type="subcellular location">
    <subcellularLocation>
        <location evidence="1">Cytoplasm</location>
    </subcellularLocation>
</comment>
<comment type="similarity">
    <text evidence="1">Belongs to the KAE1 / TsaD family.</text>
</comment>
<reference key="1">
    <citation type="journal article" date="2007" name="Nat. Biotechnol.">
        <title>Complete genome sequence of the myxobacterium Sorangium cellulosum.</title>
        <authorList>
            <person name="Schneiker S."/>
            <person name="Perlova O."/>
            <person name="Kaiser O."/>
            <person name="Gerth K."/>
            <person name="Alici A."/>
            <person name="Altmeyer M.O."/>
            <person name="Bartels D."/>
            <person name="Bekel T."/>
            <person name="Beyer S."/>
            <person name="Bode E."/>
            <person name="Bode H.B."/>
            <person name="Bolten C.J."/>
            <person name="Choudhuri J.V."/>
            <person name="Doss S."/>
            <person name="Elnakady Y.A."/>
            <person name="Frank B."/>
            <person name="Gaigalat L."/>
            <person name="Goesmann A."/>
            <person name="Groeger C."/>
            <person name="Gross F."/>
            <person name="Jelsbak L."/>
            <person name="Jelsbak L."/>
            <person name="Kalinowski J."/>
            <person name="Kegler C."/>
            <person name="Knauber T."/>
            <person name="Konietzny S."/>
            <person name="Kopp M."/>
            <person name="Krause L."/>
            <person name="Krug D."/>
            <person name="Linke B."/>
            <person name="Mahmud T."/>
            <person name="Martinez-Arias R."/>
            <person name="McHardy A.C."/>
            <person name="Merai M."/>
            <person name="Meyer F."/>
            <person name="Mormann S."/>
            <person name="Munoz-Dorado J."/>
            <person name="Perez J."/>
            <person name="Pradella S."/>
            <person name="Rachid S."/>
            <person name="Raddatz G."/>
            <person name="Rosenau F."/>
            <person name="Rueckert C."/>
            <person name="Sasse F."/>
            <person name="Scharfe M."/>
            <person name="Schuster S.C."/>
            <person name="Suen G."/>
            <person name="Treuner-Lange A."/>
            <person name="Velicer G.J."/>
            <person name="Vorholter F.-J."/>
            <person name="Weissman K.J."/>
            <person name="Welch R.D."/>
            <person name="Wenzel S.C."/>
            <person name="Whitworth D.E."/>
            <person name="Wilhelm S."/>
            <person name="Wittmann C."/>
            <person name="Bloecker H."/>
            <person name="Puehler A."/>
            <person name="Mueller R."/>
        </authorList>
    </citation>
    <scope>NUCLEOTIDE SEQUENCE [LARGE SCALE GENOMIC DNA]</scope>
    <source>
        <strain>So ce56</strain>
    </source>
</reference>
<name>TSAD_SORC5</name>
<organism>
    <name type="scientific">Sorangium cellulosum (strain So ce56)</name>
    <name type="common">Polyangium cellulosum (strain So ce56)</name>
    <dbReference type="NCBI Taxonomy" id="448385"/>
    <lineage>
        <taxon>Bacteria</taxon>
        <taxon>Pseudomonadati</taxon>
        <taxon>Myxococcota</taxon>
        <taxon>Polyangia</taxon>
        <taxon>Polyangiales</taxon>
        <taxon>Polyangiaceae</taxon>
        <taxon>Sorangium</taxon>
    </lineage>
</organism>
<gene>
    <name evidence="1" type="primary">tsaD</name>
    <name type="synonym">gcp</name>
    <name type="ordered locus">sce1614</name>
</gene>